<gene>
    <name evidence="1" type="primary">rpl2</name>
    <name type="ordered locus">Igni_1346</name>
</gene>
<comment type="function">
    <text evidence="1">One of the primary rRNA binding proteins. Required for association of the 30S and 50S subunits to form the 70S ribosome, for tRNA binding and peptide bond formation. It has been suggested to have peptidyltransferase activity; this is somewhat controversial. Makes several contacts with the 16S rRNA in the 70S ribosome.</text>
</comment>
<comment type="subunit">
    <text evidence="1">Part of the 50S ribosomal subunit. Forms a bridge to the 30S subunit in the 70S ribosome.</text>
</comment>
<comment type="similarity">
    <text evidence="1">Belongs to the universal ribosomal protein uL2 family.</text>
</comment>
<proteinExistence type="inferred from homology"/>
<organism>
    <name type="scientific">Ignicoccus hospitalis (strain KIN4/I / DSM 18386 / JCM 14125)</name>
    <dbReference type="NCBI Taxonomy" id="453591"/>
    <lineage>
        <taxon>Archaea</taxon>
        <taxon>Thermoproteota</taxon>
        <taxon>Thermoprotei</taxon>
        <taxon>Desulfurococcales</taxon>
        <taxon>Desulfurococcaceae</taxon>
        <taxon>Ignicoccus</taxon>
    </lineage>
</organism>
<protein>
    <recommendedName>
        <fullName evidence="1">Large ribosomal subunit protein uL2</fullName>
    </recommendedName>
    <alternativeName>
        <fullName evidence="3">50S ribosomal protein L2</fullName>
    </alternativeName>
</protein>
<feature type="chain" id="PRO_1000051936" description="Large ribosomal subunit protein uL2">
    <location>
        <begin position="1"/>
        <end position="251"/>
    </location>
</feature>
<feature type="region of interest" description="Disordered" evidence="2">
    <location>
        <begin position="1"/>
        <end position="22"/>
    </location>
</feature>
<feature type="compositionally biased region" description="Basic residues" evidence="2">
    <location>
        <begin position="1"/>
        <end position="12"/>
    </location>
</feature>
<name>RL2_IGNH4</name>
<dbReference type="EMBL" id="CP000816">
    <property type="protein sequence ID" value="ABU82522.1"/>
    <property type="molecule type" value="Genomic_DNA"/>
</dbReference>
<dbReference type="RefSeq" id="WP_012123486.1">
    <property type="nucleotide sequence ID" value="NC_009776.1"/>
</dbReference>
<dbReference type="SMR" id="A8AC70"/>
<dbReference type="STRING" id="453591.Igni_1346"/>
<dbReference type="GeneID" id="5563163"/>
<dbReference type="KEGG" id="iho:Igni_1346"/>
<dbReference type="eggNOG" id="arCOG04067">
    <property type="taxonomic scope" value="Archaea"/>
</dbReference>
<dbReference type="HOGENOM" id="CLU_036235_0_3_2"/>
<dbReference type="OrthoDB" id="5987at2157"/>
<dbReference type="PhylomeDB" id="A8AC70"/>
<dbReference type="Proteomes" id="UP000000262">
    <property type="component" value="Chromosome"/>
</dbReference>
<dbReference type="GO" id="GO:0022625">
    <property type="term" value="C:cytosolic large ribosomal subunit"/>
    <property type="evidence" value="ECO:0007669"/>
    <property type="project" value="TreeGrafter"/>
</dbReference>
<dbReference type="GO" id="GO:0019843">
    <property type="term" value="F:rRNA binding"/>
    <property type="evidence" value="ECO:0007669"/>
    <property type="project" value="UniProtKB-UniRule"/>
</dbReference>
<dbReference type="GO" id="GO:0003735">
    <property type="term" value="F:structural constituent of ribosome"/>
    <property type="evidence" value="ECO:0007669"/>
    <property type="project" value="InterPro"/>
</dbReference>
<dbReference type="GO" id="GO:0002181">
    <property type="term" value="P:cytoplasmic translation"/>
    <property type="evidence" value="ECO:0007669"/>
    <property type="project" value="TreeGrafter"/>
</dbReference>
<dbReference type="FunFam" id="2.30.30.30:FF:000001">
    <property type="entry name" value="50S ribosomal protein L2"/>
    <property type="match status" value="1"/>
</dbReference>
<dbReference type="FunFam" id="4.10.950.10:FF:000002">
    <property type="entry name" value="60S ribosomal protein L2"/>
    <property type="match status" value="1"/>
</dbReference>
<dbReference type="Gene3D" id="2.30.30.30">
    <property type="match status" value="1"/>
</dbReference>
<dbReference type="Gene3D" id="2.40.50.140">
    <property type="entry name" value="Nucleic acid-binding proteins"/>
    <property type="match status" value="1"/>
</dbReference>
<dbReference type="Gene3D" id="4.10.950.10">
    <property type="entry name" value="Ribosomal protein L2, domain 3"/>
    <property type="match status" value="1"/>
</dbReference>
<dbReference type="HAMAP" id="MF_01320_A">
    <property type="entry name" value="Ribosomal_uL2_A"/>
    <property type="match status" value="1"/>
</dbReference>
<dbReference type="InterPro" id="IPR012340">
    <property type="entry name" value="NA-bd_OB-fold"/>
</dbReference>
<dbReference type="InterPro" id="IPR014722">
    <property type="entry name" value="Rib_uL2_dom2"/>
</dbReference>
<dbReference type="InterPro" id="IPR002171">
    <property type="entry name" value="Ribosomal_uL2"/>
</dbReference>
<dbReference type="InterPro" id="IPR023672">
    <property type="entry name" value="Ribosomal_uL2_arc_euk"/>
</dbReference>
<dbReference type="InterPro" id="IPR022669">
    <property type="entry name" value="Ribosomal_uL2_C"/>
</dbReference>
<dbReference type="InterPro" id="IPR014726">
    <property type="entry name" value="Ribosomal_uL2_dom3"/>
</dbReference>
<dbReference type="InterPro" id="IPR022666">
    <property type="entry name" value="Ribosomal_uL2_RNA-bd_dom"/>
</dbReference>
<dbReference type="InterPro" id="IPR008991">
    <property type="entry name" value="Translation_prot_SH3-like_sf"/>
</dbReference>
<dbReference type="NCBIfam" id="NF007180">
    <property type="entry name" value="PRK09612.1"/>
    <property type="match status" value="1"/>
</dbReference>
<dbReference type="PANTHER" id="PTHR13691:SF16">
    <property type="entry name" value="LARGE RIBOSOMAL SUBUNIT PROTEIN UL2"/>
    <property type="match status" value="1"/>
</dbReference>
<dbReference type="PANTHER" id="PTHR13691">
    <property type="entry name" value="RIBOSOMAL PROTEIN L2"/>
    <property type="match status" value="1"/>
</dbReference>
<dbReference type="Pfam" id="PF00181">
    <property type="entry name" value="Ribosomal_L2"/>
    <property type="match status" value="1"/>
</dbReference>
<dbReference type="Pfam" id="PF03947">
    <property type="entry name" value="Ribosomal_L2_C"/>
    <property type="match status" value="1"/>
</dbReference>
<dbReference type="PIRSF" id="PIRSF002158">
    <property type="entry name" value="Ribosomal_L2"/>
    <property type="match status" value="1"/>
</dbReference>
<dbReference type="SMART" id="SM01383">
    <property type="entry name" value="Ribosomal_L2"/>
    <property type="match status" value="1"/>
</dbReference>
<dbReference type="SMART" id="SM01382">
    <property type="entry name" value="Ribosomal_L2_C"/>
    <property type="match status" value="1"/>
</dbReference>
<dbReference type="SUPFAM" id="SSF50249">
    <property type="entry name" value="Nucleic acid-binding proteins"/>
    <property type="match status" value="1"/>
</dbReference>
<dbReference type="SUPFAM" id="SSF50104">
    <property type="entry name" value="Translation proteins SH3-like domain"/>
    <property type="match status" value="1"/>
</dbReference>
<sequence>MGKRLRVQRHGRGTPQWRNRGHLRVAPGRYPSPEVLKLDETYEGYVVELKHDPGRWVPLAHIVIPNVADFWIPAAEGMYTGQKVQIGPNAAPVNGNILPLYAIPEGTQIFNVEIRPGDGGKLARSGGAYAILVGKSGNSAIIQLPSGKVKQVNAKARATIGIAAGAGRDEKPLLKAGNAYYKWKAKAKKWPVVRGVAMNAVNHPHGGGNHQSPGYPTTVARNAPPGQKVGHIAARCTGRGCKQAKARLGLK</sequence>
<keyword id="KW-1185">Reference proteome</keyword>
<keyword id="KW-0687">Ribonucleoprotein</keyword>
<keyword id="KW-0689">Ribosomal protein</keyword>
<keyword id="KW-0694">RNA-binding</keyword>
<keyword id="KW-0699">rRNA-binding</keyword>
<accession>A8AC70</accession>
<evidence type="ECO:0000255" key="1">
    <source>
        <dbReference type="HAMAP-Rule" id="MF_01320"/>
    </source>
</evidence>
<evidence type="ECO:0000256" key="2">
    <source>
        <dbReference type="SAM" id="MobiDB-lite"/>
    </source>
</evidence>
<evidence type="ECO:0000305" key="3"/>
<reference key="1">
    <citation type="journal article" date="2008" name="Genome Biol.">
        <title>A genomic analysis of the archaeal system Ignicoccus hospitalis-Nanoarchaeum equitans.</title>
        <authorList>
            <person name="Podar M."/>
            <person name="Anderson I."/>
            <person name="Makarova K.S."/>
            <person name="Elkins J.G."/>
            <person name="Ivanova N."/>
            <person name="Wall M.A."/>
            <person name="Lykidis A."/>
            <person name="Mavromatis K."/>
            <person name="Sun H."/>
            <person name="Hudson M.E."/>
            <person name="Chen W."/>
            <person name="Deciu C."/>
            <person name="Hutchison D."/>
            <person name="Eads J.R."/>
            <person name="Anderson A."/>
            <person name="Fernandes F."/>
            <person name="Szeto E."/>
            <person name="Lapidus A."/>
            <person name="Kyrpides N.C."/>
            <person name="Saier M.H. Jr."/>
            <person name="Richardson P.M."/>
            <person name="Rachel R."/>
            <person name="Huber H."/>
            <person name="Eisen J.A."/>
            <person name="Koonin E.V."/>
            <person name="Keller M."/>
            <person name="Stetter K.O."/>
        </authorList>
    </citation>
    <scope>NUCLEOTIDE SEQUENCE [LARGE SCALE GENOMIC DNA]</scope>
    <source>
        <strain>KIN4/I / DSM 18386 / JCM 14125</strain>
    </source>
</reference>